<comment type="function">
    <text evidence="1">Probably involved in ribonucleotide reductase function.</text>
</comment>
<comment type="similarity">
    <text evidence="1">Belongs to the NrdI family.</text>
</comment>
<feature type="chain" id="PRO_1000203156" description="Protein NrdI">
    <location>
        <begin position="1"/>
        <end position="136"/>
    </location>
</feature>
<proteinExistence type="inferred from homology"/>
<evidence type="ECO:0000255" key="1">
    <source>
        <dbReference type="HAMAP-Rule" id="MF_00128"/>
    </source>
</evidence>
<dbReference type="EMBL" id="CP001396">
    <property type="protein sequence ID" value="ACR65320.1"/>
    <property type="molecule type" value="Genomic_DNA"/>
</dbReference>
<dbReference type="RefSeq" id="WP_000080947.1">
    <property type="nucleotide sequence ID" value="NC_012759.1"/>
</dbReference>
<dbReference type="SMR" id="C4ZYS6"/>
<dbReference type="GeneID" id="75172757"/>
<dbReference type="KEGG" id="ebw:BWG_2417"/>
<dbReference type="HOGENOM" id="CLU_114845_0_0_6"/>
<dbReference type="GO" id="GO:0010181">
    <property type="term" value="F:FMN binding"/>
    <property type="evidence" value="ECO:0007669"/>
    <property type="project" value="InterPro"/>
</dbReference>
<dbReference type="GO" id="GO:0036211">
    <property type="term" value="P:protein modification process"/>
    <property type="evidence" value="ECO:0007669"/>
    <property type="project" value="InterPro"/>
</dbReference>
<dbReference type="FunFam" id="3.40.50.360:FF:000005">
    <property type="entry name" value="Protein NrdI"/>
    <property type="match status" value="1"/>
</dbReference>
<dbReference type="Gene3D" id="3.40.50.360">
    <property type="match status" value="1"/>
</dbReference>
<dbReference type="HAMAP" id="MF_00128">
    <property type="entry name" value="NrdI"/>
    <property type="match status" value="1"/>
</dbReference>
<dbReference type="InterPro" id="IPR029039">
    <property type="entry name" value="Flavoprotein-like_sf"/>
</dbReference>
<dbReference type="InterPro" id="IPR020852">
    <property type="entry name" value="RNR_Ib_NrdI_bac"/>
</dbReference>
<dbReference type="InterPro" id="IPR004465">
    <property type="entry name" value="RNR_NrdI"/>
</dbReference>
<dbReference type="NCBIfam" id="TIGR00333">
    <property type="entry name" value="nrdI"/>
    <property type="match status" value="1"/>
</dbReference>
<dbReference type="PANTHER" id="PTHR37297">
    <property type="entry name" value="PROTEIN NRDI"/>
    <property type="match status" value="1"/>
</dbReference>
<dbReference type="PANTHER" id="PTHR37297:SF1">
    <property type="entry name" value="PROTEIN NRDI"/>
    <property type="match status" value="1"/>
</dbReference>
<dbReference type="Pfam" id="PF07972">
    <property type="entry name" value="Flavodoxin_NdrI"/>
    <property type="match status" value="1"/>
</dbReference>
<dbReference type="PIRSF" id="PIRSF005087">
    <property type="entry name" value="NrdI"/>
    <property type="match status" value="1"/>
</dbReference>
<dbReference type="SUPFAM" id="SSF52218">
    <property type="entry name" value="Flavoproteins"/>
    <property type="match status" value="1"/>
</dbReference>
<reference key="1">
    <citation type="journal article" date="2009" name="J. Bacteriol.">
        <title>Genomic sequencing reveals regulatory mutations and recombinational events in the widely used MC4100 lineage of Escherichia coli K-12.</title>
        <authorList>
            <person name="Ferenci T."/>
            <person name="Zhou Z."/>
            <person name="Betteridge T."/>
            <person name="Ren Y."/>
            <person name="Liu Y."/>
            <person name="Feng L."/>
            <person name="Reeves P.R."/>
            <person name="Wang L."/>
        </authorList>
    </citation>
    <scope>NUCLEOTIDE SEQUENCE [LARGE SCALE GENOMIC DNA]</scope>
    <source>
        <strain>K12 / MC4100 / BW2952</strain>
    </source>
</reference>
<name>NRDI_ECOBW</name>
<accession>C4ZYS6</accession>
<gene>
    <name evidence="1" type="primary">nrdI</name>
    <name type="ordered locus">BWG_2417</name>
</gene>
<sequence>MSQLVYFSSSSENTQRFIERLGLPAVRIPLNERERIQVDEPYILIVPSYGGGGTAGAVPRQVIRFLNDEHNRALLRGVIASGNRNFGEAYGRAGDVIARKCGVPWLYRFELMGTQSDIENVRKGVTEFWQRQPQNA</sequence>
<protein>
    <recommendedName>
        <fullName evidence="1">Protein NrdI</fullName>
    </recommendedName>
</protein>
<organism>
    <name type="scientific">Escherichia coli (strain K12 / MC4100 / BW2952)</name>
    <dbReference type="NCBI Taxonomy" id="595496"/>
    <lineage>
        <taxon>Bacteria</taxon>
        <taxon>Pseudomonadati</taxon>
        <taxon>Pseudomonadota</taxon>
        <taxon>Gammaproteobacteria</taxon>
        <taxon>Enterobacterales</taxon>
        <taxon>Enterobacteriaceae</taxon>
        <taxon>Escherichia</taxon>
    </lineage>
</organism>